<feature type="chain" id="PRO_1000015847" description="Glutamyl-tRNA(Gln) amidotransferase subunit A">
    <location>
        <begin position="1"/>
        <end position="479"/>
    </location>
</feature>
<feature type="active site" description="Charge relay system" evidence="1">
    <location>
        <position position="71"/>
    </location>
</feature>
<feature type="active site" description="Charge relay system" evidence="1">
    <location>
        <position position="146"/>
    </location>
</feature>
<feature type="active site" description="Acyl-ester intermediate" evidence="1">
    <location>
        <position position="170"/>
    </location>
</feature>
<sequence>MNYLNENIDSLNKKLQDGEITAEDLAKETVKNIKETDKKINAWITVDDDAKPAENLDFAKNKLAGIPIAIKDNIITNGMKTTAASHILCNYMPVYDATVISKLKKAQATFVGKTNMDEFAMGSSTEHSYYGATRNPWDLEKVPGGSSGGSAAAVASGEVVAALGSDTGGSIRQPAAFNGIFGIKPTYGRVSRWGLIAFGSSLDQIGVMSKRVKDSAEVLNVIAGPDEHDATVSEKEVPDFTSFLGQDVKGLRVAVPKEYMDAVDGEMRDAIQKQIDVLKDAGAVINEVSLPHTKYVVPTYYIVASSEASSNLQRYDGIRYGYRAKDTKNLLDVYVKSRSEGFGDEVKRRIMLGSFALSAGAYDEFFKKAAQVRTLICRDFEKIFEENDVIVGPTTTEPAFGIGEEISDPIKMYNNDILTISANLAGIPAASVPAGLVDGMPAGLQIMAKRFDEGTVFKVADFIERNNKFYEKTPTGMED</sequence>
<reference key="1">
    <citation type="journal article" date="2006" name="Proc. Natl. Acad. Sci. U.S.A.">
        <title>Comparative genomics of the lactic acid bacteria.</title>
        <authorList>
            <person name="Makarova K.S."/>
            <person name="Slesarev A."/>
            <person name="Wolf Y.I."/>
            <person name="Sorokin A."/>
            <person name="Mirkin B."/>
            <person name="Koonin E.V."/>
            <person name="Pavlov A."/>
            <person name="Pavlova N."/>
            <person name="Karamychev V."/>
            <person name="Polouchine N."/>
            <person name="Shakhova V."/>
            <person name="Grigoriev I."/>
            <person name="Lou Y."/>
            <person name="Rohksar D."/>
            <person name="Lucas S."/>
            <person name="Huang K."/>
            <person name="Goodstein D.M."/>
            <person name="Hawkins T."/>
            <person name="Plengvidhya V."/>
            <person name="Welker D."/>
            <person name="Hughes J."/>
            <person name="Goh Y."/>
            <person name="Benson A."/>
            <person name="Baldwin K."/>
            <person name="Lee J.-H."/>
            <person name="Diaz-Muniz I."/>
            <person name="Dosti B."/>
            <person name="Smeianov V."/>
            <person name="Wechter W."/>
            <person name="Barabote R."/>
            <person name="Lorca G."/>
            <person name="Altermann E."/>
            <person name="Barrangou R."/>
            <person name="Ganesan B."/>
            <person name="Xie Y."/>
            <person name="Rawsthorne H."/>
            <person name="Tamir D."/>
            <person name="Parker C."/>
            <person name="Breidt F."/>
            <person name="Broadbent J.R."/>
            <person name="Hutkins R."/>
            <person name="O'Sullivan D."/>
            <person name="Steele J."/>
            <person name="Unlu G."/>
            <person name="Saier M.H. Jr."/>
            <person name="Klaenhammer T."/>
            <person name="Richardson P."/>
            <person name="Kozyavkin S."/>
            <person name="Weimer B.C."/>
            <person name="Mills D.A."/>
        </authorList>
    </citation>
    <scope>NUCLEOTIDE SEQUENCE [LARGE SCALE GENOMIC DNA]</scope>
    <source>
        <strain>ATCC 33323 / DSM 20243 / BCRC 14619 / CIP 102991 / JCM 1131 / KCTC 3163 / NCIMB 11718 / NCTC 13722 / AM63</strain>
    </source>
</reference>
<dbReference type="EC" id="6.3.5.7" evidence="1"/>
<dbReference type="EMBL" id="CP000413">
    <property type="protein sequence ID" value="ABJ60867.1"/>
    <property type="molecule type" value="Genomic_DNA"/>
</dbReference>
<dbReference type="RefSeq" id="WP_003646852.1">
    <property type="nucleotide sequence ID" value="NZ_WBMG01000003.1"/>
</dbReference>
<dbReference type="SMR" id="Q041K5"/>
<dbReference type="GeneID" id="29638628"/>
<dbReference type="KEGG" id="lga:LGAS_1512"/>
<dbReference type="HOGENOM" id="CLU_009600_0_3_9"/>
<dbReference type="BioCyc" id="LGAS324831:G1G6Y-1509-MONOMER"/>
<dbReference type="Proteomes" id="UP000000664">
    <property type="component" value="Chromosome"/>
</dbReference>
<dbReference type="GO" id="GO:0030956">
    <property type="term" value="C:glutamyl-tRNA(Gln) amidotransferase complex"/>
    <property type="evidence" value="ECO:0007669"/>
    <property type="project" value="InterPro"/>
</dbReference>
<dbReference type="GO" id="GO:0005524">
    <property type="term" value="F:ATP binding"/>
    <property type="evidence" value="ECO:0007669"/>
    <property type="project" value="UniProtKB-KW"/>
</dbReference>
<dbReference type="GO" id="GO:0050567">
    <property type="term" value="F:glutaminyl-tRNA synthase (glutamine-hydrolyzing) activity"/>
    <property type="evidence" value="ECO:0007669"/>
    <property type="project" value="UniProtKB-UniRule"/>
</dbReference>
<dbReference type="GO" id="GO:0006412">
    <property type="term" value="P:translation"/>
    <property type="evidence" value="ECO:0007669"/>
    <property type="project" value="UniProtKB-UniRule"/>
</dbReference>
<dbReference type="Gene3D" id="3.90.1300.10">
    <property type="entry name" value="Amidase signature (AS) domain"/>
    <property type="match status" value="1"/>
</dbReference>
<dbReference type="HAMAP" id="MF_00120">
    <property type="entry name" value="GatA"/>
    <property type="match status" value="1"/>
</dbReference>
<dbReference type="InterPro" id="IPR000120">
    <property type="entry name" value="Amidase"/>
</dbReference>
<dbReference type="InterPro" id="IPR020556">
    <property type="entry name" value="Amidase_CS"/>
</dbReference>
<dbReference type="InterPro" id="IPR023631">
    <property type="entry name" value="Amidase_dom"/>
</dbReference>
<dbReference type="InterPro" id="IPR036928">
    <property type="entry name" value="AS_sf"/>
</dbReference>
<dbReference type="InterPro" id="IPR004412">
    <property type="entry name" value="GatA"/>
</dbReference>
<dbReference type="NCBIfam" id="TIGR00132">
    <property type="entry name" value="gatA"/>
    <property type="match status" value="1"/>
</dbReference>
<dbReference type="PANTHER" id="PTHR11895:SF151">
    <property type="entry name" value="GLUTAMYL-TRNA(GLN) AMIDOTRANSFERASE SUBUNIT A"/>
    <property type="match status" value="1"/>
</dbReference>
<dbReference type="PANTHER" id="PTHR11895">
    <property type="entry name" value="TRANSAMIDASE"/>
    <property type="match status" value="1"/>
</dbReference>
<dbReference type="Pfam" id="PF01425">
    <property type="entry name" value="Amidase"/>
    <property type="match status" value="1"/>
</dbReference>
<dbReference type="SUPFAM" id="SSF75304">
    <property type="entry name" value="Amidase signature (AS) enzymes"/>
    <property type="match status" value="1"/>
</dbReference>
<dbReference type="PROSITE" id="PS00571">
    <property type="entry name" value="AMIDASES"/>
    <property type="match status" value="1"/>
</dbReference>
<keyword id="KW-0067">ATP-binding</keyword>
<keyword id="KW-0436">Ligase</keyword>
<keyword id="KW-0547">Nucleotide-binding</keyword>
<keyword id="KW-0648">Protein biosynthesis</keyword>
<accession>Q041K5</accession>
<proteinExistence type="inferred from homology"/>
<gene>
    <name evidence="1" type="primary">gatA</name>
    <name type="ordered locus">LGAS_1512</name>
</gene>
<comment type="function">
    <text evidence="1">Allows the formation of correctly charged Gln-tRNA(Gln) through the transamidation of misacylated Glu-tRNA(Gln) in organisms which lack glutaminyl-tRNA synthetase. The reaction takes place in the presence of glutamine and ATP through an activated gamma-phospho-Glu-tRNA(Gln).</text>
</comment>
<comment type="catalytic activity">
    <reaction evidence="1">
        <text>L-glutamyl-tRNA(Gln) + L-glutamine + ATP + H2O = L-glutaminyl-tRNA(Gln) + L-glutamate + ADP + phosphate + H(+)</text>
        <dbReference type="Rhea" id="RHEA:17521"/>
        <dbReference type="Rhea" id="RHEA-COMP:9681"/>
        <dbReference type="Rhea" id="RHEA-COMP:9684"/>
        <dbReference type="ChEBI" id="CHEBI:15377"/>
        <dbReference type="ChEBI" id="CHEBI:15378"/>
        <dbReference type="ChEBI" id="CHEBI:29985"/>
        <dbReference type="ChEBI" id="CHEBI:30616"/>
        <dbReference type="ChEBI" id="CHEBI:43474"/>
        <dbReference type="ChEBI" id="CHEBI:58359"/>
        <dbReference type="ChEBI" id="CHEBI:78520"/>
        <dbReference type="ChEBI" id="CHEBI:78521"/>
        <dbReference type="ChEBI" id="CHEBI:456216"/>
        <dbReference type="EC" id="6.3.5.7"/>
    </reaction>
</comment>
<comment type="subunit">
    <text evidence="1">Heterotrimer of A, B and C subunits.</text>
</comment>
<comment type="similarity">
    <text evidence="1">Belongs to the amidase family. GatA subfamily.</text>
</comment>
<name>GATA_LACGA</name>
<protein>
    <recommendedName>
        <fullName evidence="1">Glutamyl-tRNA(Gln) amidotransferase subunit A</fullName>
        <shortName evidence="1">Glu-ADT subunit A</shortName>
        <ecNumber evidence="1">6.3.5.7</ecNumber>
    </recommendedName>
</protein>
<evidence type="ECO:0000255" key="1">
    <source>
        <dbReference type="HAMAP-Rule" id="MF_00120"/>
    </source>
</evidence>
<organism>
    <name type="scientific">Lactobacillus gasseri (strain ATCC 33323 / DSM 20243 / BCRC 14619 / CIP 102991 / JCM 1131 / KCTC 3163 / NCIMB 11718 / NCTC 13722 / AM63)</name>
    <dbReference type="NCBI Taxonomy" id="324831"/>
    <lineage>
        <taxon>Bacteria</taxon>
        <taxon>Bacillati</taxon>
        <taxon>Bacillota</taxon>
        <taxon>Bacilli</taxon>
        <taxon>Lactobacillales</taxon>
        <taxon>Lactobacillaceae</taxon>
        <taxon>Lactobacillus</taxon>
    </lineage>
</organism>